<organism evidence="3">
    <name type="scientific">Lycium chinense</name>
    <name type="common">Chinese wolfberry</name>
    <dbReference type="NCBI Taxonomy" id="112883"/>
    <lineage>
        <taxon>Eukaryota</taxon>
        <taxon>Viridiplantae</taxon>
        <taxon>Streptophyta</taxon>
        <taxon>Embryophyta</taxon>
        <taxon>Tracheophyta</taxon>
        <taxon>Spermatophyta</taxon>
        <taxon>Magnoliopsida</taxon>
        <taxon>eudicotyledons</taxon>
        <taxon>Gunneridae</taxon>
        <taxon>Pentapetalae</taxon>
        <taxon>asterids</taxon>
        <taxon>lamiids</taxon>
        <taxon>Solanales</taxon>
        <taxon>Solanaceae</taxon>
        <taxon>Solanoideae</taxon>
        <taxon>Lycieae</taxon>
        <taxon>Lycium</taxon>
    </lineage>
</organism>
<evidence type="ECO:0000255" key="1">
    <source>
        <dbReference type="PROSITE-ProRule" id="PRU00465"/>
    </source>
</evidence>
<evidence type="ECO:0000269" key="2">
    <source>
    </source>
</evidence>
<evidence type="ECO:0000305" key="3"/>
<feature type="chain" id="PRO_0000189338" description="Ferredoxin">
    <location>
        <begin position="1"/>
        <end position="97"/>
    </location>
</feature>
<feature type="domain" description="2Fe-2S ferredoxin-type" evidence="1">
    <location>
        <begin position="3"/>
        <end position="93"/>
    </location>
</feature>
<feature type="binding site" evidence="1">
    <location>
        <position position="39"/>
    </location>
    <ligand>
        <name>[2Fe-2S] cluster</name>
        <dbReference type="ChEBI" id="CHEBI:190135"/>
    </ligand>
</feature>
<feature type="binding site" evidence="1">
    <location>
        <position position="44"/>
    </location>
    <ligand>
        <name>[2Fe-2S] cluster</name>
        <dbReference type="ChEBI" id="CHEBI:190135"/>
    </ligand>
</feature>
<feature type="binding site" evidence="1">
    <location>
        <position position="47"/>
    </location>
    <ligand>
        <name>[2Fe-2S] cluster</name>
        <dbReference type="ChEBI" id="CHEBI:190135"/>
    </ligand>
</feature>
<feature type="binding site" evidence="1">
    <location>
        <position position="77"/>
    </location>
    <ligand>
        <name>[2Fe-2S] cluster</name>
        <dbReference type="ChEBI" id="CHEBI:190135"/>
    </ligand>
</feature>
<name>FER_LYCCN</name>
<reference evidence="3" key="1">
    <citation type="journal article" date="2002" name="Biol. Pharm. Bull.">
        <title>Amino acid sequences of ferredoxins from Scopolia japonica and Lycium chinense: their similarities to that of Datura arborea.</title>
        <authorList>
            <person name="Mino Y."/>
        </authorList>
    </citation>
    <scope>PROTEIN SEQUENCE</scope>
    <scope>FUNCTION</scope>
    <scope>COFACTOR</scope>
    <scope>SUBCELLULAR LOCATION</scope>
    <source>
        <tissue>Leaf</tissue>
    </source>
</reference>
<keyword id="KW-0001">2Fe-2S</keyword>
<keyword id="KW-0150">Chloroplast</keyword>
<keyword id="KW-0903">Direct protein sequencing</keyword>
<keyword id="KW-0249">Electron transport</keyword>
<keyword id="KW-0408">Iron</keyword>
<keyword id="KW-0411">Iron-sulfur</keyword>
<keyword id="KW-0479">Metal-binding</keyword>
<keyword id="KW-0934">Plastid</keyword>
<keyword id="KW-0813">Transport</keyword>
<sequence>ATYKVKLVTPDGPVEFDCPDDVYILDQAEEEGHELPYSCRAGSCSSCAGKVSAGTVDQSDGNFLDDDQIADGFVLTCVAYPQSDVTIETHKEEALTG</sequence>
<accession>P83523</accession>
<protein>
    <recommendedName>
        <fullName>Ferredoxin</fullName>
    </recommendedName>
</protein>
<proteinExistence type="evidence at protein level"/>
<comment type="function">
    <text evidence="2">Ferredoxins are iron-sulfur proteins that transfer electrons in a wide variety of metabolic reactions.</text>
</comment>
<comment type="cofactor">
    <cofactor evidence="2">
        <name>[2Fe-2S] cluster</name>
        <dbReference type="ChEBI" id="CHEBI:190135"/>
    </cofactor>
    <text evidence="2">Binds 1 [2Fe-2S] cluster.</text>
</comment>
<comment type="subcellular location">
    <subcellularLocation>
        <location evidence="2">Plastid</location>
        <location evidence="2">Chloroplast</location>
    </subcellularLocation>
</comment>
<comment type="similarity">
    <text evidence="3">Belongs to the 2Fe2S plant-type ferredoxin family.</text>
</comment>
<dbReference type="SMR" id="P83523"/>
<dbReference type="GO" id="GO:0009507">
    <property type="term" value="C:chloroplast"/>
    <property type="evidence" value="ECO:0000304"/>
    <property type="project" value="UniProtKB"/>
</dbReference>
<dbReference type="GO" id="GO:0009570">
    <property type="term" value="C:chloroplast stroma"/>
    <property type="evidence" value="ECO:0007669"/>
    <property type="project" value="TreeGrafter"/>
</dbReference>
<dbReference type="GO" id="GO:0051537">
    <property type="term" value="F:2 iron, 2 sulfur cluster binding"/>
    <property type="evidence" value="ECO:0007669"/>
    <property type="project" value="UniProtKB-KW"/>
</dbReference>
<dbReference type="GO" id="GO:0009055">
    <property type="term" value="F:electron transfer activity"/>
    <property type="evidence" value="ECO:0000304"/>
    <property type="project" value="UniProtKB"/>
</dbReference>
<dbReference type="GO" id="GO:0008198">
    <property type="term" value="F:ferrous iron binding"/>
    <property type="evidence" value="ECO:0000304"/>
    <property type="project" value="UniProtKB"/>
</dbReference>
<dbReference type="GO" id="GO:0022900">
    <property type="term" value="P:electron transport chain"/>
    <property type="evidence" value="ECO:0007669"/>
    <property type="project" value="InterPro"/>
</dbReference>
<dbReference type="GO" id="GO:0006124">
    <property type="term" value="P:ferredoxin metabolic process"/>
    <property type="evidence" value="ECO:0000304"/>
    <property type="project" value="UniProtKB"/>
</dbReference>
<dbReference type="CDD" id="cd00207">
    <property type="entry name" value="fer2"/>
    <property type="match status" value="1"/>
</dbReference>
<dbReference type="FunFam" id="3.10.20.30:FF:000014">
    <property type="entry name" value="Ferredoxin"/>
    <property type="match status" value="1"/>
</dbReference>
<dbReference type="Gene3D" id="3.10.20.30">
    <property type="match status" value="1"/>
</dbReference>
<dbReference type="InterPro" id="IPR036010">
    <property type="entry name" value="2Fe-2S_ferredoxin-like_sf"/>
</dbReference>
<dbReference type="InterPro" id="IPR001041">
    <property type="entry name" value="2Fe-2S_ferredoxin-type"/>
</dbReference>
<dbReference type="InterPro" id="IPR006058">
    <property type="entry name" value="2Fe2S_fd_BS"/>
</dbReference>
<dbReference type="InterPro" id="IPR012675">
    <property type="entry name" value="Beta-grasp_dom_sf"/>
</dbReference>
<dbReference type="InterPro" id="IPR010241">
    <property type="entry name" value="Fd_pln"/>
</dbReference>
<dbReference type="NCBIfam" id="TIGR02008">
    <property type="entry name" value="fdx_plant"/>
    <property type="match status" value="1"/>
</dbReference>
<dbReference type="PANTHER" id="PTHR43112">
    <property type="entry name" value="FERREDOXIN"/>
    <property type="match status" value="1"/>
</dbReference>
<dbReference type="PANTHER" id="PTHR43112:SF3">
    <property type="entry name" value="FERREDOXIN-2, CHLOROPLASTIC"/>
    <property type="match status" value="1"/>
</dbReference>
<dbReference type="Pfam" id="PF00111">
    <property type="entry name" value="Fer2"/>
    <property type="match status" value="1"/>
</dbReference>
<dbReference type="SUPFAM" id="SSF54292">
    <property type="entry name" value="2Fe-2S ferredoxin-like"/>
    <property type="match status" value="1"/>
</dbReference>
<dbReference type="PROSITE" id="PS00197">
    <property type="entry name" value="2FE2S_FER_1"/>
    <property type="match status" value="1"/>
</dbReference>
<dbReference type="PROSITE" id="PS51085">
    <property type="entry name" value="2FE2S_FER_2"/>
    <property type="match status" value="1"/>
</dbReference>